<accession>A1JS15</accession>
<organism>
    <name type="scientific">Yersinia enterocolitica serotype O:8 / biotype 1B (strain NCTC 13174 / 8081)</name>
    <dbReference type="NCBI Taxonomy" id="393305"/>
    <lineage>
        <taxon>Bacteria</taxon>
        <taxon>Pseudomonadati</taxon>
        <taxon>Pseudomonadota</taxon>
        <taxon>Gammaproteobacteria</taxon>
        <taxon>Enterobacterales</taxon>
        <taxon>Yersiniaceae</taxon>
        <taxon>Yersinia</taxon>
    </lineage>
</organism>
<comment type="function">
    <text evidence="1">This protein binds to the 23S rRNA, and is important in its secondary structure. It is located near the subunit interface in the base of the L7/L12 stalk, and near the tRNA binding site of the peptidyltransferase center.</text>
</comment>
<comment type="subunit">
    <text evidence="1">Part of the 50S ribosomal subunit.</text>
</comment>
<comment type="similarity">
    <text evidence="1">Belongs to the universal ribosomal protein uL6 family.</text>
</comment>
<keyword id="KW-0687">Ribonucleoprotein</keyword>
<keyword id="KW-0689">Ribosomal protein</keyword>
<keyword id="KW-0694">RNA-binding</keyword>
<keyword id="KW-0699">rRNA-binding</keyword>
<reference key="1">
    <citation type="journal article" date="2006" name="PLoS Genet.">
        <title>The complete genome sequence and comparative genome analysis of the high pathogenicity Yersinia enterocolitica strain 8081.</title>
        <authorList>
            <person name="Thomson N.R."/>
            <person name="Howard S."/>
            <person name="Wren B.W."/>
            <person name="Holden M.T.G."/>
            <person name="Crossman L."/>
            <person name="Challis G.L."/>
            <person name="Churcher C."/>
            <person name="Mungall K."/>
            <person name="Brooks K."/>
            <person name="Chillingworth T."/>
            <person name="Feltwell T."/>
            <person name="Abdellah Z."/>
            <person name="Hauser H."/>
            <person name="Jagels K."/>
            <person name="Maddison M."/>
            <person name="Moule S."/>
            <person name="Sanders M."/>
            <person name="Whitehead S."/>
            <person name="Quail M.A."/>
            <person name="Dougan G."/>
            <person name="Parkhill J."/>
            <person name="Prentice M.B."/>
        </authorList>
    </citation>
    <scope>NUCLEOTIDE SEQUENCE [LARGE SCALE GENOMIC DNA]</scope>
    <source>
        <strain>NCTC 13174 / 8081</strain>
    </source>
</reference>
<dbReference type="EMBL" id="AM286415">
    <property type="protein sequence ID" value="CAL13927.1"/>
    <property type="molecule type" value="Genomic_DNA"/>
</dbReference>
<dbReference type="RefSeq" id="WP_005159860.1">
    <property type="nucleotide sequence ID" value="NC_008800.1"/>
</dbReference>
<dbReference type="RefSeq" id="YP_001008053.1">
    <property type="nucleotide sequence ID" value="NC_008800.1"/>
</dbReference>
<dbReference type="SMR" id="A1JS15"/>
<dbReference type="GeneID" id="93971456"/>
<dbReference type="KEGG" id="yen:YE3908"/>
<dbReference type="PATRIC" id="fig|393305.7.peg.4158"/>
<dbReference type="eggNOG" id="COG0097">
    <property type="taxonomic scope" value="Bacteria"/>
</dbReference>
<dbReference type="HOGENOM" id="CLU_065464_1_2_6"/>
<dbReference type="OrthoDB" id="9805007at2"/>
<dbReference type="Proteomes" id="UP000000642">
    <property type="component" value="Chromosome"/>
</dbReference>
<dbReference type="GO" id="GO:0022625">
    <property type="term" value="C:cytosolic large ribosomal subunit"/>
    <property type="evidence" value="ECO:0007669"/>
    <property type="project" value="TreeGrafter"/>
</dbReference>
<dbReference type="GO" id="GO:0019843">
    <property type="term" value="F:rRNA binding"/>
    <property type="evidence" value="ECO:0007669"/>
    <property type="project" value="UniProtKB-UniRule"/>
</dbReference>
<dbReference type="GO" id="GO:0003735">
    <property type="term" value="F:structural constituent of ribosome"/>
    <property type="evidence" value="ECO:0007669"/>
    <property type="project" value="InterPro"/>
</dbReference>
<dbReference type="GO" id="GO:0002181">
    <property type="term" value="P:cytoplasmic translation"/>
    <property type="evidence" value="ECO:0007669"/>
    <property type="project" value="TreeGrafter"/>
</dbReference>
<dbReference type="FunFam" id="3.90.930.12:FF:000001">
    <property type="entry name" value="50S ribosomal protein L6"/>
    <property type="match status" value="1"/>
</dbReference>
<dbReference type="FunFam" id="3.90.930.12:FF:000002">
    <property type="entry name" value="50S ribosomal protein L6"/>
    <property type="match status" value="1"/>
</dbReference>
<dbReference type="Gene3D" id="3.90.930.12">
    <property type="entry name" value="Ribosomal protein L6, alpha-beta domain"/>
    <property type="match status" value="2"/>
</dbReference>
<dbReference type="HAMAP" id="MF_01365_B">
    <property type="entry name" value="Ribosomal_uL6_B"/>
    <property type="match status" value="1"/>
</dbReference>
<dbReference type="InterPro" id="IPR000702">
    <property type="entry name" value="Ribosomal_uL6-like"/>
</dbReference>
<dbReference type="InterPro" id="IPR036789">
    <property type="entry name" value="Ribosomal_uL6-like_a/b-dom_sf"/>
</dbReference>
<dbReference type="InterPro" id="IPR020040">
    <property type="entry name" value="Ribosomal_uL6_a/b-dom"/>
</dbReference>
<dbReference type="InterPro" id="IPR019906">
    <property type="entry name" value="Ribosomal_uL6_bac-type"/>
</dbReference>
<dbReference type="InterPro" id="IPR002358">
    <property type="entry name" value="Ribosomal_uL6_CS"/>
</dbReference>
<dbReference type="NCBIfam" id="TIGR03654">
    <property type="entry name" value="L6_bact"/>
    <property type="match status" value="1"/>
</dbReference>
<dbReference type="PANTHER" id="PTHR11655">
    <property type="entry name" value="60S/50S RIBOSOMAL PROTEIN L6/L9"/>
    <property type="match status" value="1"/>
</dbReference>
<dbReference type="PANTHER" id="PTHR11655:SF14">
    <property type="entry name" value="LARGE RIBOSOMAL SUBUNIT PROTEIN UL6M"/>
    <property type="match status" value="1"/>
</dbReference>
<dbReference type="Pfam" id="PF00347">
    <property type="entry name" value="Ribosomal_L6"/>
    <property type="match status" value="2"/>
</dbReference>
<dbReference type="PIRSF" id="PIRSF002162">
    <property type="entry name" value="Ribosomal_L6"/>
    <property type="match status" value="1"/>
</dbReference>
<dbReference type="PRINTS" id="PR00059">
    <property type="entry name" value="RIBOSOMALL6"/>
</dbReference>
<dbReference type="SUPFAM" id="SSF56053">
    <property type="entry name" value="Ribosomal protein L6"/>
    <property type="match status" value="2"/>
</dbReference>
<dbReference type="PROSITE" id="PS00525">
    <property type="entry name" value="RIBOSOMAL_L6_1"/>
    <property type="match status" value="1"/>
</dbReference>
<feature type="chain" id="PRO_1000055330" description="Large ribosomal subunit protein uL6">
    <location>
        <begin position="1"/>
        <end position="177"/>
    </location>
</feature>
<protein>
    <recommendedName>
        <fullName evidence="1">Large ribosomal subunit protein uL6</fullName>
    </recommendedName>
    <alternativeName>
        <fullName evidence="2">50S ribosomal protein L6</fullName>
    </alternativeName>
</protein>
<name>RL6_YERE8</name>
<gene>
    <name evidence="1" type="primary">rplF</name>
    <name type="ordered locus">YE3908</name>
</gene>
<evidence type="ECO:0000255" key="1">
    <source>
        <dbReference type="HAMAP-Rule" id="MF_01365"/>
    </source>
</evidence>
<evidence type="ECO:0000305" key="2"/>
<proteinExistence type="inferred from homology"/>
<sequence>MSRVAKAPVVIPAGVEVKLNGQVISIKGKNGELTRTVHSAVEVKQEENTLTFAPREGAVDGWAQAGTTRALLNAMVIGVTEGFTKKLQLVGVGYRAAVKGNVVNLALGFSHPVDHELPAGITAECPTQTEIVLKGADKQVIGQVAADLRAYRRPEPYKGKGVRYADEVVRTKEAKKK</sequence>